<name>RL5_PSEPK</name>
<feature type="chain" id="PRO_0000124971" description="Large ribosomal subunit protein uL5">
    <location>
        <begin position="1"/>
        <end position="179"/>
    </location>
</feature>
<comment type="function">
    <text evidence="1">This is one of the proteins that bind and probably mediate the attachment of the 5S RNA into the large ribosomal subunit, where it forms part of the central protuberance. In the 70S ribosome it contacts protein S13 of the 30S subunit (bridge B1b), connecting the 2 subunits; this bridge is implicated in subunit movement. Contacts the P site tRNA; the 5S rRNA and some of its associated proteins might help stabilize positioning of ribosome-bound tRNAs.</text>
</comment>
<comment type="subunit">
    <text evidence="1">Part of the 50S ribosomal subunit; part of the 5S rRNA/L5/L18/L25 subcomplex. Contacts the 5S rRNA and the P site tRNA. Forms a bridge to the 30S subunit in the 70S ribosome.</text>
</comment>
<comment type="similarity">
    <text evidence="1">Belongs to the universal ribosomal protein uL5 family.</text>
</comment>
<gene>
    <name evidence="1" type="primary">rplE</name>
    <name type="ordered locus">PP_0466</name>
</gene>
<dbReference type="EMBL" id="AE015451">
    <property type="protein sequence ID" value="AAN66096.1"/>
    <property type="molecule type" value="Genomic_DNA"/>
</dbReference>
<dbReference type="RefSeq" id="NP_742632.1">
    <property type="nucleotide sequence ID" value="NC_002947.4"/>
</dbReference>
<dbReference type="RefSeq" id="WP_003255474.1">
    <property type="nucleotide sequence ID" value="NZ_CP169744.1"/>
</dbReference>
<dbReference type="SMR" id="Q88QM3"/>
<dbReference type="STRING" id="160488.PP_0466"/>
<dbReference type="PaxDb" id="160488-PP_0466"/>
<dbReference type="GeneID" id="93675534"/>
<dbReference type="KEGG" id="ppu:PP_0466"/>
<dbReference type="PATRIC" id="fig|160488.4.peg.498"/>
<dbReference type="eggNOG" id="COG0094">
    <property type="taxonomic scope" value="Bacteria"/>
</dbReference>
<dbReference type="HOGENOM" id="CLU_061015_2_1_6"/>
<dbReference type="OrthoDB" id="9806626at2"/>
<dbReference type="PhylomeDB" id="Q88QM3"/>
<dbReference type="BioCyc" id="PPUT160488:G1G01-512-MONOMER"/>
<dbReference type="Proteomes" id="UP000000556">
    <property type="component" value="Chromosome"/>
</dbReference>
<dbReference type="GO" id="GO:1990904">
    <property type="term" value="C:ribonucleoprotein complex"/>
    <property type="evidence" value="ECO:0007669"/>
    <property type="project" value="UniProtKB-KW"/>
</dbReference>
<dbReference type="GO" id="GO:0005840">
    <property type="term" value="C:ribosome"/>
    <property type="evidence" value="ECO:0007669"/>
    <property type="project" value="UniProtKB-KW"/>
</dbReference>
<dbReference type="GO" id="GO:0019843">
    <property type="term" value="F:rRNA binding"/>
    <property type="evidence" value="ECO:0007669"/>
    <property type="project" value="UniProtKB-UniRule"/>
</dbReference>
<dbReference type="GO" id="GO:0003735">
    <property type="term" value="F:structural constituent of ribosome"/>
    <property type="evidence" value="ECO:0007669"/>
    <property type="project" value="InterPro"/>
</dbReference>
<dbReference type="GO" id="GO:0000049">
    <property type="term" value="F:tRNA binding"/>
    <property type="evidence" value="ECO:0007669"/>
    <property type="project" value="UniProtKB-UniRule"/>
</dbReference>
<dbReference type="GO" id="GO:0006412">
    <property type="term" value="P:translation"/>
    <property type="evidence" value="ECO:0007669"/>
    <property type="project" value="UniProtKB-UniRule"/>
</dbReference>
<dbReference type="FunFam" id="3.30.1440.10:FF:000001">
    <property type="entry name" value="50S ribosomal protein L5"/>
    <property type="match status" value="1"/>
</dbReference>
<dbReference type="Gene3D" id="3.30.1440.10">
    <property type="match status" value="1"/>
</dbReference>
<dbReference type="HAMAP" id="MF_01333_B">
    <property type="entry name" value="Ribosomal_uL5_B"/>
    <property type="match status" value="1"/>
</dbReference>
<dbReference type="InterPro" id="IPR002132">
    <property type="entry name" value="Ribosomal_uL5"/>
</dbReference>
<dbReference type="InterPro" id="IPR020930">
    <property type="entry name" value="Ribosomal_uL5_bac-type"/>
</dbReference>
<dbReference type="InterPro" id="IPR031309">
    <property type="entry name" value="Ribosomal_uL5_C"/>
</dbReference>
<dbReference type="InterPro" id="IPR020929">
    <property type="entry name" value="Ribosomal_uL5_CS"/>
</dbReference>
<dbReference type="InterPro" id="IPR022803">
    <property type="entry name" value="Ribosomal_uL5_dom_sf"/>
</dbReference>
<dbReference type="InterPro" id="IPR031310">
    <property type="entry name" value="Ribosomal_uL5_N"/>
</dbReference>
<dbReference type="NCBIfam" id="NF000585">
    <property type="entry name" value="PRK00010.1"/>
    <property type="match status" value="1"/>
</dbReference>
<dbReference type="PANTHER" id="PTHR11994">
    <property type="entry name" value="60S RIBOSOMAL PROTEIN L11-RELATED"/>
    <property type="match status" value="1"/>
</dbReference>
<dbReference type="Pfam" id="PF00281">
    <property type="entry name" value="Ribosomal_L5"/>
    <property type="match status" value="1"/>
</dbReference>
<dbReference type="Pfam" id="PF00673">
    <property type="entry name" value="Ribosomal_L5_C"/>
    <property type="match status" value="1"/>
</dbReference>
<dbReference type="PIRSF" id="PIRSF002161">
    <property type="entry name" value="Ribosomal_L5"/>
    <property type="match status" value="1"/>
</dbReference>
<dbReference type="SUPFAM" id="SSF55282">
    <property type="entry name" value="RL5-like"/>
    <property type="match status" value="1"/>
</dbReference>
<dbReference type="PROSITE" id="PS00358">
    <property type="entry name" value="RIBOSOMAL_L5"/>
    <property type="match status" value="1"/>
</dbReference>
<proteinExistence type="inferred from homology"/>
<evidence type="ECO:0000255" key="1">
    <source>
        <dbReference type="HAMAP-Rule" id="MF_01333"/>
    </source>
</evidence>
<evidence type="ECO:0000305" key="2"/>
<accession>Q88QM3</accession>
<sequence>MARLKEIYRNEIAPKLKEELKLSNVMEVPRVTKITLNMGLGEAIGDKKVIEHAVADLEKITGQKPVVTFARKSIAGFKVREGWPIGVKVTLRSDKMYEFLDRLLAISLPRVRDFRGLNAKSFDGRGNYSMGVKEQIIFPEIDYDKIDALRGLDITLTTTARSDDEGRALLRAFKFPFRN</sequence>
<keyword id="KW-1185">Reference proteome</keyword>
<keyword id="KW-0687">Ribonucleoprotein</keyword>
<keyword id="KW-0689">Ribosomal protein</keyword>
<keyword id="KW-0694">RNA-binding</keyword>
<keyword id="KW-0699">rRNA-binding</keyword>
<keyword id="KW-0820">tRNA-binding</keyword>
<organism>
    <name type="scientific">Pseudomonas putida (strain ATCC 47054 / DSM 6125 / CFBP 8728 / NCIMB 11950 / KT2440)</name>
    <dbReference type="NCBI Taxonomy" id="160488"/>
    <lineage>
        <taxon>Bacteria</taxon>
        <taxon>Pseudomonadati</taxon>
        <taxon>Pseudomonadota</taxon>
        <taxon>Gammaproteobacteria</taxon>
        <taxon>Pseudomonadales</taxon>
        <taxon>Pseudomonadaceae</taxon>
        <taxon>Pseudomonas</taxon>
    </lineage>
</organism>
<protein>
    <recommendedName>
        <fullName evidence="1">Large ribosomal subunit protein uL5</fullName>
    </recommendedName>
    <alternativeName>
        <fullName evidence="2">50S ribosomal protein L5</fullName>
    </alternativeName>
</protein>
<reference key="1">
    <citation type="journal article" date="2002" name="Environ. Microbiol.">
        <title>Complete genome sequence and comparative analysis of the metabolically versatile Pseudomonas putida KT2440.</title>
        <authorList>
            <person name="Nelson K.E."/>
            <person name="Weinel C."/>
            <person name="Paulsen I.T."/>
            <person name="Dodson R.J."/>
            <person name="Hilbert H."/>
            <person name="Martins dos Santos V.A.P."/>
            <person name="Fouts D.E."/>
            <person name="Gill S.R."/>
            <person name="Pop M."/>
            <person name="Holmes M."/>
            <person name="Brinkac L.M."/>
            <person name="Beanan M.J."/>
            <person name="DeBoy R.T."/>
            <person name="Daugherty S.C."/>
            <person name="Kolonay J.F."/>
            <person name="Madupu R."/>
            <person name="Nelson W.C."/>
            <person name="White O."/>
            <person name="Peterson J.D."/>
            <person name="Khouri H.M."/>
            <person name="Hance I."/>
            <person name="Chris Lee P."/>
            <person name="Holtzapple E.K."/>
            <person name="Scanlan D."/>
            <person name="Tran K."/>
            <person name="Moazzez A."/>
            <person name="Utterback T.R."/>
            <person name="Rizzo M."/>
            <person name="Lee K."/>
            <person name="Kosack D."/>
            <person name="Moestl D."/>
            <person name="Wedler H."/>
            <person name="Lauber J."/>
            <person name="Stjepandic D."/>
            <person name="Hoheisel J."/>
            <person name="Straetz M."/>
            <person name="Heim S."/>
            <person name="Kiewitz C."/>
            <person name="Eisen J.A."/>
            <person name="Timmis K.N."/>
            <person name="Duesterhoeft A."/>
            <person name="Tuemmler B."/>
            <person name="Fraser C.M."/>
        </authorList>
    </citation>
    <scope>NUCLEOTIDE SEQUENCE [LARGE SCALE GENOMIC DNA]</scope>
    <source>
        <strain>ATCC 47054 / DSM 6125 / CFBP 8728 / NCIMB 11950 / KT2440</strain>
    </source>
</reference>